<evidence type="ECO:0000255" key="1">
    <source>
        <dbReference type="HAMAP-Rule" id="MF_00176"/>
    </source>
</evidence>
<dbReference type="EC" id="6.1.1.11" evidence="1"/>
<dbReference type="EMBL" id="CP000029">
    <property type="protein sequence ID" value="AAW53369.1"/>
    <property type="molecule type" value="Genomic_DNA"/>
</dbReference>
<dbReference type="RefSeq" id="WP_002485584.1">
    <property type="nucleotide sequence ID" value="NC_002976.3"/>
</dbReference>
<dbReference type="SMR" id="Q5HK07"/>
<dbReference type="STRING" id="176279.SERP2545"/>
<dbReference type="KEGG" id="ser:SERP2545"/>
<dbReference type="eggNOG" id="COG0172">
    <property type="taxonomic scope" value="Bacteria"/>
</dbReference>
<dbReference type="HOGENOM" id="CLU_023797_1_1_9"/>
<dbReference type="UniPathway" id="UPA00906">
    <property type="reaction ID" value="UER00895"/>
</dbReference>
<dbReference type="Proteomes" id="UP000000531">
    <property type="component" value="Chromosome"/>
</dbReference>
<dbReference type="GO" id="GO:0005737">
    <property type="term" value="C:cytoplasm"/>
    <property type="evidence" value="ECO:0007669"/>
    <property type="project" value="UniProtKB-SubCell"/>
</dbReference>
<dbReference type="GO" id="GO:0005524">
    <property type="term" value="F:ATP binding"/>
    <property type="evidence" value="ECO:0007669"/>
    <property type="project" value="UniProtKB-UniRule"/>
</dbReference>
<dbReference type="GO" id="GO:0140096">
    <property type="term" value="F:catalytic activity, acting on a protein"/>
    <property type="evidence" value="ECO:0007669"/>
    <property type="project" value="UniProtKB-ARBA"/>
</dbReference>
<dbReference type="GO" id="GO:0004828">
    <property type="term" value="F:serine-tRNA ligase activity"/>
    <property type="evidence" value="ECO:0007669"/>
    <property type="project" value="UniProtKB-UniRule"/>
</dbReference>
<dbReference type="GO" id="GO:0016740">
    <property type="term" value="F:transferase activity"/>
    <property type="evidence" value="ECO:0007669"/>
    <property type="project" value="UniProtKB-ARBA"/>
</dbReference>
<dbReference type="GO" id="GO:0016260">
    <property type="term" value="P:selenocysteine biosynthetic process"/>
    <property type="evidence" value="ECO:0007669"/>
    <property type="project" value="UniProtKB-UniRule"/>
</dbReference>
<dbReference type="GO" id="GO:0006434">
    <property type="term" value="P:seryl-tRNA aminoacylation"/>
    <property type="evidence" value="ECO:0007669"/>
    <property type="project" value="UniProtKB-UniRule"/>
</dbReference>
<dbReference type="CDD" id="cd00770">
    <property type="entry name" value="SerRS_core"/>
    <property type="match status" value="1"/>
</dbReference>
<dbReference type="Gene3D" id="3.30.930.10">
    <property type="entry name" value="Bira Bifunctional Protein, Domain 2"/>
    <property type="match status" value="1"/>
</dbReference>
<dbReference type="Gene3D" id="1.10.287.40">
    <property type="entry name" value="Serine-tRNA synthetase, tRNA binding domain"/>
    <property type="match status" value="1"/>
</dbReference>
<dbReference type="HAMAP" id="MF_00176">
    <property type="entry name" value="Ser_tRNA_synth_type1"/>
    <property type="match status" value="1"/>
</dbReference>
<dbReference type="InterPro" id="IPR002314">
    <property type="entry name" value="aa-tRNA-synt_IIb"/>
</dbReference>
<dbReference type="InterPro" id="IPR006195">
    <property type="entry name" value="aa-tRNA-synth_II"/>
</dbReference>
<dbReference type="InterPro" id="IPR045864">
    <property type="entry name" value="aa-tRNA-synth_II/BPL/LPL"/>
</dbReference>
<dbReference type="InterPro" id="IPR002317">
    <property type="entry name" value="Ser-tRNA-ligase_type_1"/>
</dbReference>
<dbReference type="InterPro" id="IPR015866">
    <property type="entry name" value="Ser-tRNA-synth_1_N"/>
</dbReference>
<dbReference type="InterPro" id="IPR042103">
    <property type="entry name" value="SerRS_1_N_sf"/>
</dbReference>
<dbReference type="InterPro" id="IPR033729">
    <property type="entry name" value="SerRS_core"/>
</dbReference>
<dbReference type="InterPro" id="IPR010978">
    <property type="entry name" value="tRNA-bd_arm"/>
</dbReference>
<dbReference type="NCBIfam" id="TIGR00414">
    <property type="entry name" value="serS"/>
    <property type="match status" value="1"/>
</dbReference>
<dbReference type="PANTHER" id="PTHR43697:SF1">
    <property type="entry name" value="SERINE--TRNA LIGASE"/>
    <property type="match status" value="1"/>
</dbReference>
<dbReference type="PANTHER" id="PTHR43697">
    <property type="entry name" value="SERYL-TRNA SYNTHETASE"/>
    <property type="match status" value="1"/>
</dbReference>
<dbReference type="Pfam" id="PF02403">
    <property type="entry name" value="Seryl_tRNA_N"/>
    <property type="match status" value="1"/>
</dbReference>
<dbReference type="Pfam" id="PF00587">
    <property type="entry name" value="tRNA-synt_2b"/>
    <property type="match status" value="1"/>
</dbReference>
<dbReference type="PIRSF" id="PIRSF001529">
    <property type="entry name" value="Ser-tRNA-synth_IIa"/>
    <property type="match status" value="1"/>
</dbReference>
<dbReference type="PRINTS" id="PR00981">
    <property type="entry name" value="TRNASYNTHSER"/>
</dbReference>
<dbReference type="SUPFAM" id="SSF55681">
    <property type="entry name" value="Class II aaRS and biotin synthetases"/>
    <property type="match status" value="1"/>
</dbReference>
<dbReference type="SUPFAM" id="SSF46589">
    <property type="entry name" value="tRNA-binding arm"/>
    <property type="match status" value="1"/>
</dbReference>
<dbReference type="PROSITE" id="PS50862">
    <property type="entry name" value="AA_TRNA_LIGASE_II"/>
    <property type="match status" value="1"/>
</dbReference>
<protein>
    <recommendedName>
        <fullName evidence="1">Serine--tRNA ligase</fullName>
        <ecNumber evidence="1">6.1.1.11</ecNumber>
    </recommendedName>
    <alternativeName>
        <fullName evidence="1">Seryl-tRNA synthetase</fullName>
        <shortName evidence="1">SerRS</shortName>
    </alternativeName>
    <alternativeName>
        <fullName evidence="1">Seryl-tRNA(Ser/Sec) synthetase</fullName>
    </alternativeName>
</protein>
<sequence>MLDIRLFRNEPEKVKSKIELRGDDPKVVDQVLELDEQRRELISKTEEMKAKRNKVSEEIAQKKRNKEDADDVIAEMRHLGDEIKDIDNQLNEVDNKIRDILIRIPNLINEDVPQGASDEENVEVKKWGTPRDFEFEPKAHWDLVEELKMADFERAAKVSGARFVYLTKDGALLERALMNYMLTKHTTQHGYTEMMTPQLVNADTMFGTGQLPKFEEDLFKVEKEGLYTIPTAEVPLTNFYRDEIIQPGVLPELFTAQTACFRSEAGSAGRDTRGLIRLHQFDKVEMVRIVQPEDSWDALEEMTQNAEAILEELGLPYRRVILCTGDIGFSASKTYDLEVWLPSYNDYKEISSCSNCTDFQARRANIRFKRDAASKPELVHTLNGSGLAVGRTFAAIVENYQNEDGTLTIPEALVPFMGGKTKIEKPIK</sequence>
<feature type="chain" id="PRO_0000122126" description="Serine--tRNA ligase">
    <location>
        <begin position="1"/>
        <end position="428"/>
    </location>
</feature>
<feature type="binding site" evidence="1">
    <location>
        <begin position="231"/>
        <end position="233"/>
    </location>
    <ligand>
        <name>L-serine</name>
        <dbReference type="ChEBI" id="CHEBI:33384"/>
    </ligand>
</feature>
<feature type="binding site" evidence="1">
    <location>
        <begin position="262"/>
        <end position="264"/>
    </location>
    <ligand>
        <name>ATP</name>
        <dbReference type="ChEBI" id="CHEBI:30616"/>
    </ligand>
</feature>
<feature type="binding site" evidence="1">
    <location>
        <position position="285"/>
    </location>
    <ligand>
        <name>L-serine</name>
        <dbReference type="ChEBI" id="CHEBI:33384"/>
    </ligand>
</feature>
<feature type="binding site" evidence="1">
    <location>
        <begin position="349"/>
        <end position="352"/>
    </location>
    <ligand>
        <name>ATP</name>
        <dbReference type="ChEBI" id="CHEBI:30616"/>
    </ligand>
</feature>
<feature type="binding site" evidence="1">
    <location>
        <position position="385"/>
    </location>
    <ligand>
        <name>L-serine</name>
        <dbReference type="ChEBI" id="CHEBI:33384"/>
    </ligand>
</feature>
<reference key="1">
    <citation type="journal article" date="2005" name="J. Bacteriol.">
        <title>Insights on evolution of virulence and resistance from the complete genome analysis of an early methicillin-resistant Staphylococcus aureus strain and a biofilm-producing methicillin-resistant Staphylococcus epidermidis strain.</title>
        <authorList>
            <person name="Gill S.R."/>
            <person name="Fouts D.E."/>
            <person name="Archer G.L."/>
            <person name="Mongodin E.F."/>
            <person name="DeBoy R.T."/>
            <person name="Ravel J."/>
            <person name="Paulsen I.T."/>
            <person name="Kolonay J.F."/>
            <person name="Brinkac L.M."/>
            <person name="Beanan M.J."/>
            <person name="Dodson R.J."/>
            <person name="Daugherty S.C."/>
            <person name="Madupu R."/>
            <person name="Angiuoli S.V."/>
            <person name="Durkin A.S."/>
            <person name="Haft D.H."/>
            <person name="Vamathevan J.J."/>
            <person name="Khouri H."/>
            <person name="Utterback T.R."/>
            <person name="Lee C."/>
            <person name="Dimitrov G."/>
            <person name="Jiang L."/>
            <person name="Qin H."/>
            <person name="Weidman J."/>
            <person name="Tran K."/>
            <person name="Kang K.H."/>
            <person name="Hance I.R."/>
            <person name="Nelson K.E."/>
            <person name="Fraser C.M."/>
        </authorList>
    </citation>
    <scope>NUCLEOTIDE SEQUENCE [LARGE SCALE GENOMIC DNA]</scope>
    <source>
        <strain>ATCC 35984 / DSM 28319 / BCRC 17069 / CCUG 31568 / BM 3577 / RP62A</strain>
    </source>
</reference>
<gene>
    <name evidence="1" type="primary">serS</name>
    <name type="ordered locus">SERP2545</name>
</gene>
<name>SYS_STAEQ</name>
<accession>Q5HK07</accession>
<keyword id="KW-0030">Aminoacyl-tRNA synthetase</keyword>
<keyword id="KW-0067">ATP-binding</keyword>
<keyword id="KW-0963">Cytoplasm</keyword>
<keyword id="KW-0436">Ligase</keyword>
<keyword id="KW-0547">Nucleotide-binding</keyword>
<keyword id="KW-0648">Protein biosynthesis</keyword>
<keyword id="KW-1185">Reference proteome</keyword>
<organism>
    <name type="scientific">Staphylococcus epidermidis (strain ATCC 35984 / DSM 28319 / BCRC 17069 / CCUG 31568 / BM 3577 / RP62A)</name>
    <dbReference type="NCBI Taxonomy" id="176279"/>
    <lineage>
        <taxon>Bacteria</taxon>
        <taxon>Bacillati</taxon>
        <taxon>Bacillota</taxon>
        <taxon>Bacilli</taxon>
        <taxon>Bacillales</taxon>
        <taxon>Staphylococcaceae</taxon>
        <taxon>Staphylococcus</taxon>
    </lineage>
</organism>
<comment type="function">
    <text evidence="1">Catalyzes the attachment of serine to tRNA(Ser). Is also able to aminoacylate tRNA(Sec) with serine, to form the misacylated tRNA L-seryl-tRNA(Sec), which will be further converted into selenocysteinyl-tRNA(Sec).</text>
</comment>
<comment type="catalytic activity">
    <reaction evidence="1">
        <text>tRNA(Ser) + L-serine + ATP = L-seryl-tRNA(Ser) + AMP + diphosphate + H(+)</text>
        <dbReference type="Rhea" id="RHEA:12292"/>
        <dbReference type="Rhea" id="RHEA-COMP:9669"/>
        <dbReference type="Rhea" id="RHEA-COMP:9703"/>
        <dbReference type="ChEBI" id="CHEBI:15378"/>
        <dbReference type="ChEBI" id="CHEBI:30616"/>
        <dbReference type="ChEBI" id="CHEBI:33019"/>
        <dbReference type="ChEBI" id="CHEBI:33384"/>
        <dbReference type="ChEBI" id="CHEBI:78442"/>
        <dbReference type="ChEBI" id="CHEBI:78533"/>
        <dbReference type="ChEBI" id="CHEBI:456215"/>
        <dbReference type="EC" id="6.1.1.11"/>
    </reaction>
</comment>
<comment type="catalytic activity">
    <reaction evidence="1">
        <text>tRNA(Sec) + L-serine + ATP = L-seryl-tRNA(Sec) + AMP + diphosphate + H(+)</text>
        <dbReference type="Rhea" id="RHEA:42580"/>
        <dbReference type="Rhea" id="RHEA-COMP:9742"/>
        <dbReference type="Rhea" id="RHEA-COMP:10128"/>
        <dbReference type="ChEBI" id="CHEBI:15378"/>
        <dbReference type="ChEBI" id="CHEBI:30616"/>
        <dbReference type="ChEBI" id="CHEBI:33019"/>
        <dbReference type="ChEBI" id="CHEBI:33384"/>
        <dbReference type="ChEBI" id="CHEBI:78442"/>
        <dbReference type="ChEBI" id="CHEBI:78533"/>
        <dbReference type="ChEBI" id="CHEBI:456215"/>
        <dbReference type="EC" id="6.1.1.11"/>
    </reaction>
</comment>
<comment type="pathway">
    <text evidence="1">Aminoacyl-tRNA biosynthesis; selenocysteinyl-tRNA(Sec) biosynthesis; L-seryl-tRNA(Sec) from L-serine and tRNA(Sec): step 1/1.</text>
</comment>
<comment type="subunit">
    <text evidence="1">Homodimer. The tRNA molecule binds across the dimer.</text>
</comment>
<comment type="subcellular location">
    <subcellularLocation>
        <location evidence="1">Cytoplasm</location>
    </subcellularLocation>
</comment>
<comment type="domain">
    <text evidence="1">Consists of two distinct domains, a catalytic core and a N-terminal extension that is involved in tRNA binding.</text>
</comment>
<comment type="similarity">
    <text evidence="1">Belongs to the class-II aminoacyl-tRNA synthetase family. Type-1 seryl-tRNA synthetase subfamily.</text>
</comment>
<proteinExistence type="inferred from homology"/>